<proteinExistence type="evidence at protein level"/>
<dbReference type="GO" id="GO:0005576">
    <property type="term" value="C:extracellular region"/>
    <property type="evidence" value="ECO:0007669"/>
    <property type="project" value="UniProtKB-SubCell"/>
</dbReference>
<dbReference type="GO" id="GO:0019834">
    <property type="term" value="F:phospholipase A2 inhibitor activity"/>
    <property type="evidence" value="ECO:0007669"/>
    <property type="project" value="UniProtKB-KW"/>
</dbReference>
<feature type="chain" id="PRO_0000452702" description="Phospholipase A2 inhibitor gamma subunit B1" evidence="3">
    <location>
        <begin position="1"/>
        <end position="19" status="greater than"/>
    </location>
</feature>
<feature type="glycosylation site" description="N-linked (GlcNAc...) asparagine" evidence="2">
    <location>
        <position position="14"/>
    </location>
</feature>
<feature type="disulfide bond" evidence="1">
    <location>
        <begin position="3"/>
        <end status="unknown"/>
    </location>
</feature>
<feature type="disulfide bond" evidence="1">
    <location>
        <begin position="6"/>
        <end position="13"/>
    </location>
</feature>
<feature type="non-terminal residue">
    <location>
        <position position="19"/>
    </location>
</feature>
<name>PLIGB_CRODU</name>
<accession>P0DUK4</accession>
<comment type="function">
    <text>Inhibits the enzymatic activity of phospholipase A2 (PLA2).</text>
</comment>
<comment type="subunit">
    <text evidence="6">Multimer.</text>
</comment>
<comment type="subcellular location">
    <subcellularLocation>
        <location evidence="3">Secreted</location>
    </subcellularLocation>
    <text evidence="3">Secreted in blood plasma.</text>
</comment>
<comment type="tissue specificity">
    <text evidence="6">Expressed by the liver.</text>
</comment>
<comment type="mass spectrometry" mass="20173.0" method="MALDI" evidence="3"/>
<comment type="similarity">
    <text evidence="5">Belongs to the CNF-like-inhibitor family.</text>
</comment>
<keyword id="KW-0903">Direct protein sequencing</keyword>
<keyword id="KW-1015">Disulfide bond</keyword>
<keyword id="KW-0325">Glycoprotein</keyword>
<keyword id="KW-0593">Phospholipase A2 inhibitor</keyword>
<keyword id="KW-0964">Secreted</keyword>
<organism>
    <name type="scientific">Crotalus durissus terrificus</name>
    <name type="common">South American rattlesnake</name>
    <dbReference type="NCBI Taxonomy" id="8732"/>
    <lineage>
        <taxon>Eukaryota</taxon>
        <taxon>Metazoa</taxon>
        <taxon>Chordata</taxon>
        <taxon>Craniata</taxon>
        <taxon>Vertebrata</taxon>
        <taxon>Euteleostomi</taxon>
        <taxon>Lepidosauria</taxon>
        <taxon>Squamata</taxon>
        <taxon>Bifurcata</taxon>
        <taxon>Unidentata</taxon>
        <taxon>Episquamata</taxon>
        <taxon>Toxicofera</taxon>
        <taxon>Serpentes</taxon>
        <taxon>Colubroidea</taxon>
        <taxon>Viperidae</taxon>
        <taxon>Crotalinae</taxon>
        <taxon>Crotalus</taxon>
    </lineage>
</organism>
<reference key="1">
    <citation type="journal article" date="2014" name="Biochim. Biophys. Acta">
        <title>Insights on the structure of native CNF, an endogenous phospholipase A2 inhibitor from Crotalus durissus terrificus, the South American rattlesnake.</title>
        <authorList>
            <person name="Fortes-Dias C.L."/>
            <person name="Ortolani P.L."/>
            <person name="Fernandes C.A."/>
            <person name="Lobo K.R."/>
            <person name="Amaral de Melo L."/>
            <person name="Borges M.H."/>
            <person name="Pazin W.M."/>
            <person name="de Oliveira Neto O."/>
            <person name="Fernandez R.M."/>
            <person name="Fontes M.R."/>
        </authorList>
    </citation>
    <scope>PROTEIN SEQUENCE</scope>
    <scope>SUBUNIT</scope>
    <scope>MASS SPECTROMETRY</scope>
    <source>
        <tissue>Plasma</tissue>
    </source>
</reference>
<sequence length="19" mass="2104">IECEVCMKPGDRCNGSMMT</sequence>
<evidence type="ECO:0000250" key="1">
    <source>
        <dbReference type="UniProtKB" id="Q7LZI2"/>
    </source>
</evidence>
<evidence type="ECO:0000255" key="2"/>
<evidence type="ECO:0000269" key="3">
    <source>
    </source>
</evidence>
<evidence type="ECO:0000303" key="4">
    <source>
    </source>
</evidence>
<evidence type="ECO:0000305" key="5"/>
<evidence type="ECO:0000305" key="6">
    <source>
    </source>
</evidence>
<protein>
    <recommendedName>
        <fullName evidence="4">Phospholipase A2 inhibitor gamma subunit B1</fullName>
        <shortName evidence="4">gamma-PLI B1</shortName>
    </recommendedName>
    <alternativeName>
        <fullName evidence="4">Phospholipase A2 inhibitor gamma 20 kDa subunit</fullName>
    </alternativeName>
</protein>